<proteinExistence type="inferred from homology"/>
<protein>
    <recommendedName>
        <fullName evidence="1">Urease accessory protein UreE</fullName>
    </recommendedName>
</protein>
<sequence length="231" mass="25876">MILIEHILGNVKKDPVWREKLKDATFDLLILDQREAQKSRCRKSSTQGLDLGISLDRNVVLADGDVLAWDEETNVAVVVQINLRDVMVIDLSELKSRSPDELIKTCFELGHALGNQHWKAVTKHNEVYVPLTVATTMMDSVMRTHGFQHLPFRFVKGAEILPLLTNSEARLLFGGAEDTDTHVHVASPLDEPHGSGLHIHGIHSHGEGHSHGDHDHDHSHSHGDHDHDHKH</sequence>
<name>UREE_YERPY</name>
<keyword id="KW-0143">Chaperone</keyword>
<keyword id="KW-0963">Cytoplasm</keyword>
<keyword id="KW-0533">Nickel</keyword>
<gene>
    <name evidence="1" type="primary">ureE</name>
    <name type="ordered locus">YPK_1134</name>
</gene>
<reference key="1">
    <citation type="submission" date="2008-02" db="EMBL/GenBank/DDBJ databases">
        <title>Complete sequence of Yersinia pseudotuberculosis YPIII.</title>
        <authorList>
            <consortium name="US DOE Joint Genome Institute"/>
            <person name="Copeland A."/>
            <person name="Lucas S."/>
            <person name="Lapidus A."/>
            <person name="Glavina del Rio T."/>
            <person name="Dalin E."/>
            <person name="Tice H."/>
            <person name="Bruce D."/>
            <person name="Goodwin L."/>
            <person name="Pitluck S."/>
            <person name="Munk A.C."/>
            <person name="Brettin T."/>
            <person name="Detter J.C."/>
            <person name="Han C."/>
            <person name="Tapia R."/>
            <person name="Schmutz J."/>
            <person name="Larimer F."/>
            <person name="Land M."/>
            <person name="Hauser L."/>
            <person name="Challacombe J.F."/>
            <person name="Green L."/>
            <person name="Lindler L.E."/>
            <person name="Nikolich M.P."/>
            <person name="Richardson P."/>
        </authorList>
    </citation>
    <scope>NUCLEOTIDE SEQUENCE [LARGE SCALE GENOMIC DNA]</scope>
    <source>
        <strain>YPIII</strain>
    </source>
</reference>
<organism>
    <name type="scientific">Yersinia pseudotuberculosis serotype O:3 (strain YPIII)</name>
    <dbReference type="NCBI Taxonomy" id="502800"/>
    <lineage>
        <taxon>Bacteria</taxon>
        <taxon>Pseudomonadati</taxon>
        <taxon>Pseudomonadota</taxon>
        <taxon>Gammaproteobacteria</taxon>
        <taxon>Enterobacterales</taxon>
        <taxon>Yersiniaceae</taxon>
        <taxon>Yersinia</taxon>
    </lineage>
</organism>
<comment type="function">
    <text evidence="1">Involved in urease metallocenter assembly. Binds nickel. Probably functions as a nickel donor during metallocenter assembly.</text>
</comment>
<comment type="subcellular location">
    <subcellularLocation>
        <location evidence="1">Cytoplasm</location>
    </subcellularLocation>
</comment>
<comment type="similarity">
    <text evidence="1">Belongs to the UreE family.</text>
</comment>
<evidence type="ECO:0000255" key="1">
    <source>
        <dbReference type="HAMAP-Rule" id="MF_00822"/>
    </source>
</evidence>
<evidence type="ECO:0000256" key="2">
    <source>
        <dbReference type="SAM" id="MobiDB-lite"/>
    </source>
</evidence>
<accession>B1JR72</accession>
<dbReference type="EMBL" id="CP000950">
    <property type="protein sequence ID" value="ACA67432.1"/>
    <property type="molecule type" value="Genomic_DNA"/>
</dbReference>
<dbReference type="RefSeq" id="WP_011192844.1">
    <property type="nucleotide sequence ID" value="NZ_CP009792.1"/>
</dbReference>
<dbReference type="SMR" id="B1JR72"/>
<dbReference type="GeneID" id="49785047"/>
<dbReference type="KEGG" id="ypy:YPK_1134"/>
<dbReference type="PATRIC" id="fig|502800.11.peg.1768"/>
<dbReference type="GO" id="GO:0005737">
    <property type="term" value="C:cytoplasm"/>
    <property type="evidence" value="ECO:0007669"/>
    <property type="project" value="UniProtKB-SubCell"/>
</dbReference>
<dbReference type="GO" id="GO:0016151">
    <property type="term" value="F:nickel cation binding"/>
    <property type="evidence" value="ECO:0007669"/>
    <property type="project" value="UniProtKB-UniRule"/>
</dbReference>
<dbReference type="GO" id="GO:0051082">
    <property type="term" value="F:unfolded protein binding"/>
    <property type="evidence" value="ECO:0007669"/>
    <property type="project" value="UniProtKB-UniRule"/>
</dbReference>
<dbReference type="GO" id="GO:0006457">
    <property type="term" value="P:protein folding"/>
    <property type="evidence" value="ECO:0007669"/>
    <property type="project" value="InterPro"/>
</dbReference>
<dbReference type="CDD" id="cd00571">
    <property type="entry name" value="UreE"/>
    <property type="match status" value="1"/>
</dbReference>
<dbReference type="Gene3D" id="2.60.260.20">
    <property type="entry name" value="Urease metallochaperone UreE, N-terminal domain"/>
    <property type="match status" value="1"/>
</dbReference>
<dbReference type="HAMAP" id="MF_00822">
    <property type="entry name" value="UreE"/>
    <property type="match status" value="1"/>
</dbReference>
<dbReference type="InterPro" id="IPR012406">
    <property type="entry name" value="UreE"/>
</dbReference>
<dbReference type="InterPro" id="IPR004029">
    <property type="entry name" value="UreE_N"/>
</dbReference>
<dbReference type="InterPro" id="IPR036118">
    <property type="entry name" value="UreE_N_sf"/>
</dbReference>
<dbReference type="NCBIfam" id="NF009761">
    <property type="entry name" value="PRK13262.1"/>
    <property type="match status" value="1"/>
</dbReference>
<dbReference type="Pfam" id="PF02814">
    <property type="entry name" value="UreE_N"/>
    <property type="match status" value="1"/>
</dbReference>
<dbReference type="SMART" id="SM00988">
    <property type="entry name" value="UreE_N"/>
    <property type="match status" value="1"/>
</dbReference>
<dbReference type="SUPFAM" id="SSF69287">
    <property type="entry name" value="Urease metallochaperone UreE, N-terminal domain"/>
    <property type="match status" value="1"/>
</dbReference>
<feature type="chain" id="PRO_1000197455" description="Urease accessory protein UreE">
    <location>
        <begin position="1"/>
        <end position="231"/>
    </location>
</feature>
<feature type="region of interest" description="Disordered" evidence="2">
    <location>
        <begin position="185"/>
        <end position="231"/>
    </location>
</feature>
<feature type="compositionally biased region" description="Basic and acidic residues" evidence="2">
    <location>
        <begin position="204"/>
        <end position="231"/>
    </location>
</feature>